<organism>
    <name type="scientific">Escherichia coli (strain UTI89 / UPEC)</name>
    <dbReference type="NCBI Taxonomy" id="364106"/>
    <lineage>
        <taxon>Bacteria</taxon>
        <taxon>Pseudomonadati</taxon>
        <taxon>Pseudomonadota</taxon>
        <taxon>Gammaproteobacteria</taxon>
        <taxon>Enterobacterales</taxon>
        <taxon>Enterobacteriaceae</taxon>
        <taxon>Escherichia</taxon>
    </lineage>
</organism>
<comment type="function">
    <text evidence="1">Major role in the synthesis of nucleoside triphosphates other than ATP. The ATP gamma phosphate is transferred to the NDP beta phosphate via a ping-pong mechanism, using a phosphorylated active-site intermediate.</text>
</comment>
<comment type="catalytic activity">
    <reaction evidence="1">
        <text>a 2'-deoxyribonucleoside 5'-diphosphate + ATP = a 2'-deoxyribonucleoside 5'-triphosphate + ADP</text>
        <dbReference type="Rhea" id="RHEA:44640"/>
        <dbReference type="ChEBI" id="CHEBI:30616"/>
        <dbReference type="ChEBI" id="CHEBI:61560"/>
        <dbReference type="ChEBI" id="CHEBI:73316"/>
        <dbReference type="ChEBI" id="CHEBI:456216"/>
        <dbReference type="EC" id="2.7.4.6"/>
    </reaction>
</comment>
<comment type="catalytic activity">
    <reaction evidence="1">
        <text>a ribonucleoside 5'-diphosphate + ATP = a ribonucleoside 5'-triphosphate + ADP</text>
        <dbReference type="Rhea" id="RHEA:18113"/>
        <dbReference type="ChEBI" id="CHEBI:30616"/>
        <dbReference type="ChEBI" id="CHEBI:57930"/>
        <dbReference type="ChEBI" id="CHEBI:61557"/>
        <dbReference type="ChEBI" id="CHEBI:456216"/>
        <dbReference type="EC" id="2.7.4.6"/>
    </reaction>
</comment>
<comment type="cofactor">
    <cofactor evidence="1">
        <name>Mg(2+)</name>
        <dbReference type="ChEBI" id="CHEBI:18420"/>
    </cofactor>
</comment>
<comment type="subunit">
    <text evidence="1">Homotetramer.</text>
</comment>
<comment type="subcellular location">
    <subcellularLocation>
        <location evidence="1">Cytoplasm</location>
    </subcellularLocation>
</comment>
<comment type="similarity">
    <text evidence="1">Belongs to the NDK family.</text>
</comment>
<accession>Q1R8L4</accession>
<sequence length="143" mass="15436">MAIERTFSIIKPNAVAKNVIGSIFARFEAAGFKIVGTKMLHLTVEQARGFYAEHDGKPFFDGLVEFMTSGPIVVSVLEGENAVQRHRDLLGATNPANALAGTLRADYADSLTENGTHGSDSVESAAREIAYFFGEGEVCPRTR</sequence>
<proteinExistence type="inferred from homology"/>
<feature type="chain" id="PRO_0000267777" description="Nucleoside diphosphate kinase">
    <location>
        <begin position="1"/>
        <end position="143"/>
    </location>
</feature>
<feature type="active site" description="Pros-phosphohistidine intermediate" evidence="1">
    <location>
        <position position="117"/>
    </location>
</feature>
<feature type="binding site" evidence="1">
    <location>
        <position position="11"/>
    </location>
    <ligand>
        <name>ATP</name>
        <dbReference type="ChEBI" id="CHEBI:30616"/>
    </ligand>
</feature>
<feature type="binding site" evidence="1">
    <location>
        <position position="59"/>
    </location>
    <ligand>
        <name>ATP</name>
        <dbReference type="ChEBI" id="CHEBI:30616"/>
    </ligand>
</feature>
<feature type="binding site" evidence="1">
    <location>
        <position position="87"/>
    </location>
    <ligand>
        <name>ATP</name>
        <dbReference type="ChEBI" id="CHEBI:30616"/>
    </ligand>
</feature>
<feature type="binding site" evidence="1">
    <location>
        <position position="93"/>
    </location>
    <ligand>
        <name>ATP</name>
        <dbReference type="ChEBI" id="CHEBI:30616"/>
    </ligand>
</feature>
<feature type="binding site" evidence="1">
    <location>
        <position position="104"/>
    </location>
    <ligand>
        <name>ATP</name>
        <dbReference type="ChEBI" id="CHEBI:30616"/>
    </ligand>
</feature>
<feature type="binding site" evidence="1">
    <location>
        <position position="114"/>
    </location>
    <ligand>
        <name>ATP</name>
        <dbReference type="ChEBI" id="CHEBI:30616"/>
    </ligand>
</feature>
<gene>
    <name evidence="1" type="primary">ndk</name>
    <name type="ordered locus">UTI89_C2840</name>
</gene>
<evidence type="ECO:0000255" key="1">
    <source>
        <dbReference type="HAMAP-Rule" id="MF_00451"/>
    </source>
</evidence>
<dbReference type="EC" id="2.7.4.6" evidence="1"/>
<dbReference type="EMBL" id="CP000243">
    <property type="protein sequence ID" value="ABE08300.1"/>
    <property type="molecule type" value="Genomic_DNA"/>
</dbReference>
<dbReference type="RefSeq" id="WP_000963841.1">
    <property type="nucleotide sequence ID" value="NZ_CP064825.1"/>
</dbReference>
<dbReference type="SMR" id="Q1R8L4"/>
<dbReference type="GeneID" id="86947407"/>
<dbReference type="KEGG" id="eci:UTI89_C2840"/>
<dbReference type="HOGENOM" id="CLU_060216_8_1_6"/>
<dbReference type="Proteomes" id="UP000001952">
    <property type="component" value="Chromosome"/>
</dbReference>
<dbReference type="GO" id="GO:0005737">
    <property type="term" value="C:cytoplasm"/>
    <property type="evidence" value="ECO:0007669"/>
    <property type="project" value="UniProtKB-SubCell"/>
</dbReference>
<dbReference type="GO" id="GO:0005524">
    <property type="term" value="F:ATP binding"/>
    <property type="evidence" value="ECO:0007669"/>
    <property type="project" value="UniProtKB-UniRule"/>
</dbReference>
<dbReference type="GO" id="GO:0046872">
    <property type="term" value="F:metal ion binding"/>
    <property type="evidence" value="ECO:0007669"/>
    <property type="project" value="UniProtKB-KW"/>
</dbReference>
<dbReference type="GO" id="GO:0004550">
    <property type="term" value="F:nucleoside diphosphate kinase activity"/>
    <property type="evidence" value="ECO:0007669"/>
    <property type="project" value="UniProtKB-UniRule"/>
</dbReference>
<dbReference type="GO" id="GO:0006241">
    <property type="term" value="P:CTP biosynthetic process"/>
    <property type="evidence" value="ECO:0007669"/>
    <property type="project" value="UniProtKB-UniRule"/>
</dbReference>
<dbReference type="GO" id="GO:0006183">
    <property type="term" value="P:GTP biosynthetic process"/>
    <property type="evidence" value="ECO:0007669"/>
    <property type="project" value="UniProtKB-UniRule"/>
</dbReference>
<dbReference type="GO" id="GO:0006228">
    <property type="term" value="P:UTP biosynthetic process"/>
    <property type="evidence" value="ECO:0007669"/>
    <property type="project" value="UniProtKB-UniRule"/>
</dbReference>
<dbReference type="CDD" id="cd04413">
    <property type="entry name" value="NDPk_I"/>
    <property type="match status" value="1"/>
</dbReference>
<dbReference type="FunFam" id="3.30.70.141:FF:000001">
    <property type="entry name" value="Nucleoside diphosphate kinase"/>
    <property type="match status" value="1"/>
</dbReference>
<dbReference type="Gene3D" id="3.30.70.141">
    <property type="entry name" value="Nucleoside diphosphate kinase-like domain"/>
    <property type="match status" value="1"/>
</dbReference>
<dbReference type="HAMAP" id="MF_00451">
    <property type="entry name" value="NDP_kinase"/>
    <property type="match status" value="1"/>
</dbReference>
<dbReference type="InterPro" id="IPR034907">
    <property type="entry name" value="NDK-like_dom"/>
</dbReference>
<dbReference type="InterPro" id="IPR036850">
    <property type="entry name" value="NDK-like_dom_sf"/>
</dbReference>
<dbReference type="InterPro" id="IPR001564">
    <property type="entry name" value="Nucleoside_diP_kinase"/>
</dbReference>
<dbReference type="InterPro" id="IPR023005">
    <property type="entry name" value="Nucleoside_diP_kinase_AS"/>
</dbReference>
<dbReference type="NCBIfam" id="NF001908">
    <property type="entry name" value="PRK00668.1"/>
    <property type="match status" value="1"/>
</dbReference>
<dbReference type="PANTHER" id="PTHR46161">
    <property type="entry name" value="NUCLEOSIDE DIPHOSPHATE KINASE"/>
    <property type="match status" value="1"/>
</dbReference>
<dbReference type="PANTHER" id="PTHR46161:SF3">
    <property type="entry name" value="NUCLEOSIDE DIPHOSPHATE KINASE DDB_G0292928-RELATED"/>
    <property type="match status" value="1"/>
</dbReference>
<dbReference type="Pfam" id="PF00334">
    <property type="entry name" value="NDK"/>
    <property type="match status" value="1"/>
</dbReference>
<dbReference type="PRINTS" id="PR01243">
    <property type="entry name" value="NUCDPKINASE"/>
</dbReference>
<dbReference type="SMART" id="SM00562">
    <property type="entry name" value="NDK"/>
    <property type="match status" value="1"/>
</dbReference>
<dbReference type="SUPFAM" id="SSF54919">
    <property type="entry name" value="Nucleoside diphosphate kinase, NDK"/>
    <property type="match status" value="1"/>
</dbReference>
<dbReference type="PROSITE" id="PS00469">
    <property type="entry name" value="NDPK"/>
    <property type="match status" value="1"/>
</dbReference>
<dbReference type="PROSITE" id="PS51374">
    <property type="entry name" value="NDPK_LIKE"/>
    <property type="match status" value="1"/>
</dbReference>
<protein>
    <recommendedName>
        <fullName evidence="1">Nucleoside diphosphate kinase</fullName>
        <shortName evidence="1">NDK</shortName>
        <shortName evidence="1">NDP kinase</shortName>
        <ecNumber evidence="1">2.7.4.6</ecNumber>
    </recommendedName>
    <alternativeName>
        <fullName evidence="1">Nucleoside-2-P kinase</fullName>
    </alternativeName>
</protein>
<name>NDK_ECOUT</name>
<reference key="1">
    <citation type="journal article" date="2006" name="Proc. Natl. Acad. Sci. U.S.A.">
        <title>Identification of genes subject to positive selection in uropathogenic strains of Escherichia coli: a comparative genomics approach.</title>
        <authorList>
            <person name="Chen S.L."/>
            <person name="Hung C.-S."/>
            <person name="Xu J."/>
            <person name="Reigstad C.S."/>
            <person name="Magrini V."/>
            <person name="Sabo A."/>
            <person name="Blasiar D."/>
            <person name="Bieri T."/>
            <person name="Meyer R.R."/>
            <person name="Ozersky P."/>
            <person name="Armstrong J.R."/>
            <person name="Fulton R.S."/>
            <person name="Latreille J.P."/>
            <person name="Spieth J."/>
            <person name="Hooton T.M."/>
            <person name="Mardis E.R."/>
            <person name="Hultgren S.J."/>
            <person name="Gordon J.I."/>
        </authorList>
    </citation>
    <scope>NUCLEOTIDE SEQUENCE [LARGE SCALE GENOMIC DNA]</scope>
    <source>
        <strain>UTI89 / UPEC</strain>
    </source>
</reference>
<keyword id="KW-0067">ATP-binding</keyword>
<keyword id="KW-0963">Cytoplasm</keyword>
<keyword id="KW-0418">Kinase</keyword>
<keyword id="KW-0460">Magnesium</keyword>
<keyword id="KW-0479">Metal-binding</keyword>
<keyword id="KW-0546">Nucleotide metabolism</keyword>
<keyword id="KW-0547">Nucleotide-binding</keyword>
<keyword id="KW-0597">Phosphoprotein</keyword>
<keyword id="KW-0808">Transferase</keyword>